<dbReference type="PIR" id="A02554">
    <property type="entry name" value="GPVF"/>
</dbReference>
<dbReference type="SMR" id="P02232"/>
<dbReference type="GO" id="GO:0005829">
    <property type="term" value="C:cytosol"/>
    <property type="evidence" value="ECO:0007669"/>
    <property type="project" value="UniProtKB-SubCell"/>
</dbReference>
<dbReference type="GO" id="GO:0005634">
    <property type="term" value="C:nucleus"/>
    <property type="evidence" value="ECO:0007669"/>
    <property type="project" value="UniProtKB-SubCell"/>
</dbReference>
<dbReference type="GO" id="GO:0020037">
    <property type="term" value="F:heme binding"/>
    <property type="evidence" value="ECO:0007669"/>
    <property type="project" value="InterPro"/>
</dbReference>
<dbReference type="GO" id="GO:0046872">
    <property type="term" value="F:metal ion binding"/>
    <property type="evidence" value="ECO:0007669"/>
    <property type="project" value="UniProtKB-KW"/>
</dbReference>
<dbReference type="GO" id="GO:0019825">
    <property type="term" value="F:oxygen binding"/>
    <property type="evidence" value="ECO:0007669"/>
    <property type="project" value="InterPro"/>
</dbReference>
<dbReference type="GO" id="GO:0005344">
    <property type="term" value="F:oxygen carrier activity"/>
    <property type="evidence" value="ECO:0007669"/>
    <property type="project" value="UniProtKB-KW"/>
</dbReference>
<dbReference type="GO" id="GO:0009877">
    <property type="term" value="P:nodulation"/>
    <property type="evidence" value="ECO:0007669"/>
    <property type="project" value="UniProtKB-KW"/>
</dbReference>
<dbReference type="GO" id="GO:0009737">
    <property type="term" value="P:response to abscisic acid"/>
    <property type="evidence" value="ECO:0007669"/>
    <property type="project" value="UniProtKB-ARBA"/>
</dbReference>
<dbReference type="Gene3D" id="1.10.490.10">
    <property type="entry name" value="Globins"/>
    <property type="match status" value="1"/>
</dbReference>
<dbReference type="InterPro" id="IPR000971">
    <property type="entry name" value="Globin"/>
</dbReference>
<dbReference type="InterPro" id="IPR009050">
    <property type="entry name" value="Globin-like_sf"/>
</dbReference>
<dbReference type="InterPro" id="IPR012292">
    <property type="entry name" value="Globin/Proto"/>
</dbReference>
<dbReference type="InterPro" id="IPR001032">
    <property type="entry name" value="Leghaemoglobin-like"/>
</dbReference>
<dbReference type="InterPro" id="IPR019824">
    <property type="entry name" value="Leghaemoglobin_Fe_BS"/>
</dbReference>
<dbReference type="PANTHER" id="PTHR22924">
    <property type="entry name" value="LEGHEMOGLOBIN-RELATED"/>
    <property type="match status" value="1"/>
</dbReference>
<dbReference type="PANTHER" id="PTHR22924:SF92">
    <property type="entry name" value="NON-SYMBIOTIC HEMOGLOBIN 2"/>
    <property type="match status" value="1"/>
</dbReference>
<dbReference type="Pfam" id="PF00042">
    <property type="entry name" value="Globin"/>
    <property type="match status" value="1"/>
</dbReference>
<dbReference type="PRINTS" id="PR00188">
    <property type="entry name" value="PLANTGLOBIN"/>
</dbReference>
<dbReference type="SUPFAM" id="SSF46458">
    <property type="entry name" value="Globin-like"/>
    <property type="match status" value="1"/>
</dbReference>
<dbReference type="PROSITE" id="PS01033">
    <property type="entry name" value="GLOBIN"/>
    <property type="match status" value="1"/>
</dbReference>
<dbReference type="PROSITE" id="PS00208">
    <property type="entry name" value="PLANT_GLOBIN"/>
    <property type="match status" value="1"/>
</dbReference>
<gene>
    <name evidence="8" type="primary">LBI</name>
</gene>
<proteinExistence type="evidence at protein level"/>
<accession>P02232</accession>
<name>LGB1_VICFA</name>
<evidence type="ECO:0000250" key="1">
    <source>
        <dbReference type="UniProtKB" id="P02234"/>
    </source>
</evidence>
<evidence type="ECO:0000250" key="2">
    <source>
        <dbReference type="UniProtKB" id="P02237"/>
    </source>
</evidence>
<evidence type="ECO:0000250" key="3">
    <source>
        <dbReference type="UniProtKB" id="P02240"/>
    </source>
</evidence>
<evidence type="ECO:0000250" key="4">
    <source>
        <dbReference type="UniProtKB" id="Q3C1F7"/>
    </source>
</evidence>
<evidence type="ECO:0000250" key="5">
    <source>
        <dbReference type="UniProtKB" id="Q43296"/>
    </source>
</evidence>
<evidence type="ECO:0000255" key="6">
    <source>
        <dbReference type="PROSITE-ProRule" id="PRU00238"/>
    </source>
</evidence>
<evidence type="ECO:0000269" key="7">
    <source>
    </source>
</evidence>
<evidence type="ECO:0000303" key="8">
    <source>
    </source>
</evidence>
<evidence type="ECO:0000305" key="9"/>
<evidence type="ECO:0000305" key="10">
    <source>
    </source>
</evidence>
<organism>
    <name type="scientific">Vicia faba</name>
    <name type="common">Broad bean</name>
    <name type="synonym">Faba vulgaris</name>
    <dbReference type="NCBI Taxonomy" id="3906"/>
    <lineage>
        <taxon>Eukaryota</taxon>
        <taxon>Viridiplantae</taxon>
        <taxon>Streptophyta</taxon>
        <taxon>Embryophyta</taxon>
        <taxon>Tracheophyta</taxon>
        <taxon>Spermatophyta</taxon>
        <taxon>Magnoliopsida</taxon>
        <taxon>eudicotyledons</taxon>
        <taxon>Gunneridae</taxon>
        <taxon>Pentapetalae</taxon>
        <taxon>rosids</taxon>
        <taxon>fabids</taxon>
        <taxon>Fabales</taxon>
        <taxon>Fabaceae</taxon>
        <taxon>Papilionoideae</taxon>
        <taxon>50 kb inversion clade</taxon>
        <taxon>NPAAA clade</taxon>
        <taxon>Hologalegina</taxon>
        <taxon>IRL clade</taxon>
        <taxon>Fabeae</taxon>
        <taxon>Vicia</taxon>
    </lineage>
</organism>
<comment type="function">
    <text evidence="2 5">Leghemoglobin that reversibly binds oxygen O(2) through a pentacoordinated heme iron (By similarity). In root nodules, facilitates the diffusion of oxygen to the bacteroids while preventing the bacterial nitrogenase from being inactivated by buffering dioxygen, nitric oxide and carbon monoxide, and promoting the formation of reactive oxygen species (ROS, e.g. H(2)O(2)) (By similarity). This role is essential for symbiotic nitrogen fixation (SNF) (By similarity).</text>
</comment>
<comment type="subunit">
    <text evidence="3">Monomer.</text>
</comment>
<comment type="subcellular location">
    <subcellularLocation>
        <location evidence="3">Cytoplasm</location>
        <location evidence="3">Cytosol</location>
    </subcellularLocation>
    <subcellularLocation>
        <location evidence="3">Nucleus</location>
    </subcellularLocation>
</comment>
<comment type="tissue specificity">
    <text evidence="7">Root nodules.</text>
</comment>
<comment type="PTM">
    <text evidence="1">Nitrated in effective nodules and particularly in hypoxic conditions; this mechanism may play a protective role in the symbiosis by buffering toxic peroxynitrite NO(2)(-). Nitration level decrease during nodule senescence.</text>
</comment>
<comment type="PTM">
    <text evidence="4">Phosphorylation at Ser-45 disrupts the molecular environment of its porphyrin ring oxygen binding pocket, thus leading to a reduced oxygen consumption and to the delivery of oxygen O(2) to symbiosomes.</text>
</comment>
<comment type="miscellaneous">
    <text evidence="10">Asp-5, Gln-6, Gly-23, Gly-24, Lys-35, Gly-42, Gln-57, Gln-65, Glu-72, Ile-75, Gln-78, Glu-127, Ile-129, and Glu-135 were also found in this pooled preparation.</text>
</comment>
<comment type="similarity">
    <text evidence="9">Belongs to the plant globin family.</text>
</comment>
<feature type="initiator methionine" description="Removed" evidence="7">
    <location>
        <position position="1"/>
    </location>
</feature>
<feature type="chain" id="PRO_0000193006" description="Leghemoglobin-1">
    <location>
        <begin position="2"/>
        <end position="144"/>
    </location>
</feature>
<feature type="domain" description="Globin" evidence="6">
    <location>
        <begin position="2"/>
        <end position="144"/>
    </location>
</feature>
<feature type="binding site" evidence="3">
    <location>
        <position position="45"/>
    </location>
    <ligand>
        <name>heme b</name>
        <dbReference type="ChEBI" id="CHEBI:60344"/>
    </ligand>
</feature>
<feature type="binding site" evidence="3">
    <location>
        <position position="62"/>
    </location>
    <ligand>
        <name>O2</name>
        <dbReference type="ChEBI" id="CHEBI:15379"/>
    </ligand>
</feature>
<feature type="binding site" evidence="3">
    <location>
        <position position="65"/>
    </location>
    <ligand>
        <name>heme b</name>
        <dbReference type="ChEBI" id="CHEBI:60344"/>
    </ligand>
</feature>
<feature type="binding site" description="proximal binding residue" evidence="6">
    <location>
        <position position="93"/>
    </location>
    <ligand>
        <name>heme b</name>
        <dbReference type="ChEBI" id="CHEBI:60344"/>
    </ligand>
    <ligandPart>
        <name>Fe</name>
        <dbReference type="ChEBI" id="CHEBI:18248"/>
    </ligandPart>
</feature>
<feature type="binding site" evidence="3">
    <location>
        <position position="96"/>
    </location>
    <ligand>
        <name>heme b</name>
        <dbReference type="ChEBI" id="CHEBI:60344"/>
    </ligand>
</feature>
<feature type="modified residue" description="Nitrated tyrosine" evidence="1">
    <location>
        <position position="25"/>
    </location>
</feature>
<feature type="modified residue" description="Nitrated tyrosine" evidence="1">
    <location>
        <position position="30"/>
    </location>
</feature>
<feature type="modified residue" description="Phosphoserine" evidence="4">
    <location>
        <position position="45"/>
    </location>
</feature>
<feature type="modified residue" description="Nitrated tyrosine" evidence="1">
    <location>
        <position position="134"/>
    </location>
</feature>
<sequence>MGFTEKQEALVNSSSQLFKQNPSNYSVLFYTIILQKAPTAKAMFSFLKDSAGVVDSPKLGAHAEKVFGMVRDSAVQLRATGEVVLDGKDGSIHIQKGVLDPHFVVVKEALLKTIKEASGDKWSEELSAAWEVAYDGLATAIKAA</sequence>
<keyword id="KW-0963">Cytoplasm</keyword>
<keyword id="KW-0903">Direct protein sequencing</keyword>
<keyword id="KW-0349">Heme</keyword>
<keyword id="KW-0408">Iron</keyword>
<keyword id="KW-0479">Metal-binding</keyword>
<keyword id="KW-0944">Nitration</keyword>
<keyword id="KW-0535">Nitrogen fixation</keyword>
<keyword id="KW-0536">Nodulation</keyword>
<keyword id="KW-0539">Nucleus</keyword>
<keyword id="KW-0561">Oxygen transport</keyword>
<keyword id="KW-0597">Phosphoprotein</keyword>
<keyword id="KW-0813">Transport</keyword>
<protein>
    <recommendedName>
        <fullName evidence="8">Leghemoglobin-1</fullName>
    </recommendedName>
    <alternativeName>
        <fullName evidence="8">Leghemoglobin I</fullName>
    </alternativeName>
</protein>
<reference key="1">
    <citation type="journal article" date="1975" name="FEBS Lett.">
        <title>The amino acid sequence of leghaemoglobin I from root nodules of broad bean (Vicia faba L.).</title>
        <authorList>
            <person name="Richardson M."/>
            <person name="Dilworth M.J."/>
            <person name="Scawen M.D."/>
        </authorList>
    </citation>
    <scope>PROTEIN SEQUENCE OF 2-144</scope>
    <scope>TISSUE SPECIFICITY</scope>
    <source>
        <strain>cv. Early white</strain>
        <tissue>Root nodule</tissue>
    </source>
</reference>